<keyword id="KW-0963">Cytoplasm</keyword>
<keyword id="KW-1185">Reference proteome</keyword>
<reference key="1">
    <citation type="journal article" date="2005" name="Nat. Biotechnol.">
        <title>The complete genome sequence of the meat-borne lactic acid bacterium Lactobacillus sakei 23K.</title>
        <authorList>
            <person name="Chaillou S."/>
            <person name="Champomier-Verges M.-C."/>
            <person name="Cornet M."/>
            <person name="Crutz-Le Coq A.-M."/>
            <person name="Dudez A.-M."/>
            <person name="Martin V."/>
            <person name="Beaufils S."/>
            <person name="Darbon-Rongere E."/>
            <person name="Bossy R."/>
            <person name="Loux V."/>
            <person name="Zagorec M."/>
        </authorList>
    </citation>
    <scope>NUCLEOTIDE SEQUENCE [LARGE SCALE GENOMIC DNA]</scope>
    <source>
        <strain>23K</strain>
    </source>
</reference>
<organism>
    <name type="scientific">Latilactobacillus sakei subsp. sakei (strain 23K)</name>
    <name type="common">Lactobacillus sakei subsp. sakei</name>
    <dbReference type="NCBI Taxonomy" id="314315"/>
    <lineage>
        <taxon>Bacteria</taxon>
        <taxon>Bacillati</taxon>
        <taxon>Bacillota</taxon>
        <taxon>Bacilli</taxon>
        <taxon>Lactobacillales</taxon>
        <taxon>Lactobacillaceae</taxon>
        <taxon>Latilactobacillus</taxon>
    </lineage>
</organism>
<sequence length="80" mass="9500">MAMDQKRLDRINELAHKAKAEGLTPEETMERQELRDAYLKDFRSSFRSQVEMLQVYDKEGKEVTPEKVKDIQREKGLRDD</sequence>
<feature type="chain" id="PRO_1000180975" description="UPF0291 protein LCA_1274">
    <location>
        <begin position="1"/>
        <end position="80"/>
    </location>
</feature>
<feature type="region of interest" description="Disordered" evidence="2">
    <location>
        <begin position="59"/>
        <end position="80"/>
    </location>
</feature>
<proteinExistence type="inferred from homology"/>
<dbReference type="EMBL" id="CR936503">
    <property type="protein sequence ID" value="CAI55578.1"/>
    <property type="molecule type" value="Genomic_DNA"/>
</dbReference>
<dbReference type="RefSeq" id="WP_011374971.1">
    <property type="nucleotide sequence ID" value="NC_007576.1"/>
</dbReference>
<dbReference type="SMR" id="Q38W55"/>
<dbReference type="STRING" id="314315.LCA_1274"/>
<dbReference type="GeneID" id="57132188"/>
<dbReference type="KEGG" id="lsa:LCA_1274"/>
<dbReference type="eggNOG" id="COG4224">
    <property type="taxonomic scope" value="Bacteria"/>
</dbReference>
<dbReference type="HOGENOM" id="CLU_173137_0_1_9"/>
<dbReference type="OrthoDB" id="390105at2"/>
<dbReference type="Proteomes" id="UP000002707">
    <property type="component" value="Chromosome"/>
</dbReference>
<dbReference type="GO" id="GO:0005737">
    <property type="term" value="C:cytoplasm"/>
    <property type="evidence" value="ECO:0007669"/>
    <property type="project" value="UniProtKB-SubCell"/>
</dbReference>
<dbReference type="Gene3D" id="1.10.287.540">
    <property type="entry name" value="Helix hairpin bin"/>
    <property type="match status" value="1"/>
</dbReference>
<dbReference type="HAMAP" id="MF_01103">
    <property type="entry name" value="UPF0291"/>
    <property type="match status" value="1"/>
</dbReference>
<dbReference type="InterPro" id="IPR009242">
    <property type="entry name" value="DUF896"/>
</dbReference>
<dbReference type="PANTHER" id="PTHR37300">
    <property type="entry name" value="UPF0291 PROTEIN CBO2609/CLC_2481"/>
    <property type="match status" value="1"/>
</dbReference>
<dbReference type="PANTHER" id="PTHR37300:SF1">
    <property type="entry name" value="UPF0291 PROTEIN YNZC"/>
    <property type="match status" value="1"/>
</dbReference>
<dbReference type="Pfam" id="PF05979">
    <property type="entry name" value="DUF896"/>
    <property type="match status" value="1"/>
</dbReference>
<dbReference type="SUPFAM" id="SSF158221">
    <property type="entry name" value="YnzC-like"/>
    <property type="match status" value="1"/>
</dbReference>
<accession>Q38W55</accession>
<evidence type="ECO:0000255" key="1">
    <source>
        <dbReference type="HAMAP-Rule" id="MF_01103"/>
    </source>
</evidence>
<evidence type="ECO:0000256" key="2">
    <source>
        <dbReference type="SAM" id="MobiDB-lite"/>
    </source>
</evidence>
<protein>
    <recommendedName>
        <fullName evidence="1">UPF0291 protein LCA_1274</fullName>
    </recommendedName>
</protein>
<comment type="subcellular location">
    <subcellularLocation>
        <location evidence="1">Cytoplasm</location>
    </subcellularLocation>
</comment>
<comment type="similarity">
    <text evidence="1">Belongs to the UPF0291 family.</text>
</comment>
<name>Y1274_LATSS</name>
<gene>
    <name type="ordered locus">LCA_1274</name>
</gene>